<comment type="function">
    <text evidence="1">Binds the 23S rRNA.</text>
</comment>
<comment type="subunit">
    <text evidence="1">Part of the 50S ribosomal subunit.</text>
</comment>
<comment type="similarity">
    <text evidence="1">Belongs to the bacterial ribosomal protein bL31 family. Type A subfamily.</text>
</comment>
<sequence length="83" mass="9179">MPKPDIHPTWYPDAKVICNGEVVMTTGATQPEIHVDVWSGNHPFFTGTQKILDTEGRVDRFMKKYGMGTKKKGADSAKAESKA</sequence>
<feature type="chain" id="PRO_0000259234" description="Large ribosomal subunit protein bL31">
    <location>
        <begin position="1"/>
        <end position="83"/>
    </location>
</feature>
<evidence type="ECO:0000255" key="1">
    <source>
        <dbReference type="HAMAP-Rule" id="MF_00501"/>
    </source>
</evidence>
<evidence type="ECO:0000305" key="2"/>
<gene>
    <name evidence="1" type="primary">rpmE</name>
    <name evidence="1" type="synonym">rpl31</name>
    <name type="ordered locus">Syncc9605_0348</name>
</gene>
<dbReference type="EMBL" id="CP000110">
    <property type="protein sequence ID" value="ABB34124.1"/>
    <property type="molecule type" value="Genomic_DNA"/>
</dbReference>
<dbReference type="RefSeq" id="WP_006851595.1">
    <property type="nucleotide sequence ID" value="NC_007516.1"/>
</dbReference>
<dbReference type="STRING" id="110662.Syncc9605_0348"/>
<dbReference type="KEGG" id="syd:Syncc9605_0348"/>
<dbReference type="eggNOG" id="COG0254">
    <property type="taxonomic scope" value="Bacteria"/>
</dbReference>
<dbReference type="HOGENOM" id="CLU_114306_1_2_3"/>
<dbReference type="OrthoDB" id="9803251at2"/>
<dbReference type="GO" id="GO:1990904">
    <property type="term" value="C:ribonucleoprotein complex"/>
    <property type="evidence" value="ECO:0007669"/>
    <property type="project" value="UniProtKB-KW"/>
</dbReference>
<dbReference type="GO" id="GO:0005840">
    <property type="term" value="C:ribosome"/>
    <property type="evidence" value="ECO:0007669"/>
    <property type="project" value="UniProtKB-KW"/>
</dbReference>
<dbReference type="GO" id="GO:0019843">
    <property type="term" value="F:rRNA binding"/>
    <property type="evidence" value="ECO:0007669"/>
    <property type="project" value="UniProtKB-KW"/>
</dbReference>
<dbReference type="GO" id="GO:0003735">
    <property type="term" value="F:structural constituent of ribosome"/>
    <property type="evidence" value="ECO:0007669"/>
    <property type="project" value="InterPro"/>
</dbReference>
<dbReference type="GO" id="GO:0006412">
    <property type="term" value="P:translation"/>
    <property type="evidence" value="ECO:0007669"/>
    <property type="project" value="UniProtKB-UniRule"/>
</dbReference>
<dbReference type="Gene3D" id="4.10.830.30">
    <property type="entry name" value="Ribosomal protein L31"/>
    <property type="match status" value="1"/>
</dbReference>
<dbReference type="HAMAP" id="MF_00501">
    <property type="entry name" value="Ribosomal_bL31_1"/>
    <property type="match status" value="1"/>
</dbReference>
<dbReference type="InterPro" id="IPR034704">
    <property type="entry name" value="Ribosomal_bL28/bL31-like_sf"/>
</dbReference>
<dbReference type="InterPro" id="IPR002150">
    <property type="entry name" value="Ribosomal_bL31"/>
</dbReference>
<dbReference type="InterPro" id="IPR027491">
    <property type="entry name" value="Ribosomal_bL31_A"/>
</dbReference>
<dbReference type="InterPro" id="IPR042105">
    <property type="entry name" value="Ribosomal_bL31_sf"/>
</dbReference>
<dbReference type="NCBIfam" id="TIGR00105">
    <property type="entry name" value="L31"/>
    <property type="match status" value="1"/>
</dbReference>
<dbReference type="NCBIfam" id="NF000612">
    <property type="entry name" value="PRK00019.1"/>
    <property type="match status" value="1"/>
</dbReference>
<dbReference type="NCBIfam" id="NF001809">
    <property type="entry name" value="PRK00528.1"/>
    <property type="match status" value="1"/>
</dbReference>
<dbReference type="PANTHER" id="PTHR33280">
    <property type="entry name" value="50S RIBOSOMAL PROTEIN L31, CHLOROPLASTIC"/>
    <property type="match status" value="1"/>
</dbReference>
<dbReference type="PANTHER" id="PTHR33280:SF1">
    <property type="entry name" value="LARGE RIBOSOMAL SUBUNIT PROTEIN BL31C"/>
    <property type="match status" value="1"/>
</dbReference>
<dbReference type="Pfam" id="PF01197">
    <property type="entry name" value="Ribosomal_L31"/>
    <property type="match status" value="1"/>
</dbReference>
<dbReference type="PRINTS" id="PR01249">
    <property type="entry name" value="RIBOSOMALL31"/>
</dbReference>
<dbReference type="SUPFAM" id="SSF143800">
    <property type="entry name" value="L28p-like"/>
    <property type="match status" value="1"/>
</dbReference>
<dbReference type="PROSITE" id="PS01143">
    <property type="entry name" value="RIBOSOMAL_L31"/>
    <property type="match status" value="1"/>
</dbReference>
<reference key="1">
    <citation type="submission" date="2005-07" db="EMBL/GenBank/DDBJ databases">
        <title>Complete sequence of Synechococcus sp. CC9605.</title>
        <authorList>
            <consortium name="US DOE Joint Genome Institute"/>
            <person name="Copeland A."/>
            <person name="Lucas S."/>
            <person name="Lapidus A."/>
            <person name="Barry K."/>
            <person name="Detter J.C."/>
            <person name="Glavina T."/>
            <person name="Hammon N."/>
            <person name="Israni S."/>
            <person name="Pitluck S."/>
            <person name="Schmutz J."/>
            <person name="Martinez M."/>
            <person name="Larimer F."/>
            <person name="Land M."/>
            <person name="Kyrpides N."/>
            <person name="Ivanova N."/>
            <person name="Richardson P."/>
        </authorList>
    </citation>
    <scope>NUCLEOTIDE SEQUENCE [LARGE SCALE GENOMIC DNA]</scope>
    <source>
        <strain>CC9605</strain>
    </source>
</reference>
<keyword id="KW-0687">Ribonucleoprotein</keyword>
<keyword id="KW-0689">Ribosomal protein</keyword>
<keyword id="KW-0694">RNA-binding</keyword>
<keyword id="KW-0699">rRNA-binding</keyword>
<accession>Q3AMQ8</accession>
<name>RL31_SYNSC</name>
<protein>
    <recommendedName>
        <fullName evidence="1">Large ribosomal subunit protein bL31</fullName>
    </recommendedName>
    <alternativeName>
        <fullName evidence="2">50S ribosomal protein L31</fullName>
    </alternativeName>
</protein>
<organism>
    <name type="scientific">Synechococcus sp. (strain CC9605)</name>
    <dbReference type="NCBI Taxonomy" id="110662"/>
    <lineage>
        <taxon>Bacteria</taxon>
        <taxon>Bacillati</taxon>
        <taxon>Cyanobacteriota</taxon>
        <taxon>Cyanophyceae</taxon>
        <taxon>Synechococcales</taxon>
        <taxon>Synechococcaceae</taxon>
        <taxon>Synechococcus</taxon>
    </lineage>
</organism>
<proteinExistence type="inferred from homology"/>